<sequence length="558" mass="62025">MEIILFLTMMVMITYVFSGYLYRVALVQSSRVDLIFTRFENMCFKIIGTDLEHMSAKTYVKHFLAFNGFMGFITFVLLIVQQWLFLNPNHILNQSIDLAFNTAISFLTNSNLQHYNGESDVTYLTQMIVMTYLMFTSSASGYAVCIAMLRRLTGLTNIIGNFYQDIVRFIVRVLLPLSCLISILLMTQGVPQTLHANLMIRTLSGHIQHIAFGPIASLESIKHLGTNGGGFLAGNSATPFENPNIWSNFIEMGSMMLLPMSMLFLFGRMLSRHGKRVHRHALILFVAMFFIFIAILTLTMWSEYRGNPILANLGIYGPNMEGKEVRFGAGLSALFTVITTAFTTGSVNNMHDSLTPIGGLGPMVLMMLNVVFGGEGVGLMNLLIFVLLTVFICSLMVGKTPEYLNMPIGAREMKCIVLVFLIHPILILVFSALAFMIPGASESITNPSFHGISQVMYEMTSAAANNGSGFEGLKDDTTFWNISTGIIMLLSRYIPIILQLMIASSLVNKKSYHQDKYTIAIDKPYFGVSLIVFIVLLSGLTFIPVLLLGPIGEFLTLK</sequence>
<feature type="chain" id="PRO_0000166525" description="Potassium-transporting ATPase potassium-binding subunit 1">
    <location>
        <begin position="1"/>
        <end position="558"/>
    </location>
</feature>
<feature type="transmembrane region" description="Helical" evidence="1">
    <location>
        <begin position="1"/>
        <end position="21"/>
    </location>
</feature>
<feature type="transmembrane region" description="Helical" evidence="1">
    <location>
        <begin position="66"/>
        <end position="86"/>
    </location>
</feature>
<feature type="transmembrane region" description="Helical" evidence="1">
    <location>
        <begin position="127"/>
        <end position="147"/>
    </location>
</feature>
<feature type="transmembrane region" description="Helical" evidence="1">
    <location>
        <begin position="166"/>
        <end position="186"/>
    </location>
</feature>
<feature type="transmembrane region" description="Helical" evidence="1">
    <location>
        <begin position="245"/>
        <end position="265"/>
    </location>
</feature>
<feature type="transmembrane region" description="Helical" evidence="1">
    <location>
        <begin position="281"/>
        <end position="301"/>
    </location>
</feature>
<feature type="transmembrane region" description="Helical" evidence="1">
    <location>
        <begin position="327"/>
        <end position="347"/>
    </location>
</feature>
<feature type="transmembrane region" description="Helical" evidence="1">
    <location>
        <begin position="354"/>
        <end position="374"/>
    </location>
</feature>
<feature type="transmembrane region" description="Helical" evidence="1">
    <location>
        <begin position="377"/>
        <end position="397"/>
    </location>
</feature>
<feature type="transmembrane region" description="Helical" evidence="1">
    <location>
        <begin position="416"/>
        <end position="436"/>
    </location>
</feature>
<feature type="transmembrane region" description="Helical" evidence="1">
    <location>
        <begin position="482"/>
        <end position="502"/>
    </location>
</feature>
<feature type="transmembrane region" description="Helical" evidence="1">
    <location>
        <begin position="531"/>
        <end position="551"/>
    </location>
</feature>
<dbReference type="EMBL" id="BA000017">
    <property type="protein sequence ID" value="BAB58239.1"/>
    <property type="molecule type" value="Genomic_DNA"/>
</dbReference>
<dbReference type="SMR" id="Q99SH9"/>
<dbReference type="KEGG" id="sav:SAV2077"/>
<dbReference type="HOGENOM" id="CLU_018614_3_0_9"/>
<dbReference type="PhylomeDB" id="Q99SH9"/>
<dbReference type="Proteomes" id="UP000002481">
    <property type="component" value="Chromosome"/>
</dbReference>
<dbReference type="GO" id="GO:0005886">
    <property type="term" value="C:plasma membrane"/>
    <property type="evidence" value="ECO:0007669"/>
    <property type="project" value="UniProtKB-SubCell"/>
</dbReference>
<dbReference type="GO" id="GO:0008556">
    <property type="term" value="F:P-type potassium transmembrane transporter activity"/>
    <property type="evidence" value="ECO:0007669"/>
    <property type="project" value="InterPro"/>
</dbReference>
<dbReference type="GO" id="GO:0030955">
    <property type="term" value="F:potassium ion binding"/>
    <property type="evidence" value="ECO:0007669"/>
    <property type="project" value="UniProtKB-UniRule"/>
</dbReference>
<dbReference type="HAMAP" id="MF_00275">
    <property type="entry name" value="KdpA"/>
    <property type="match status" value="1"/>
</dbReference>
<dbReference type="InterPro" id="IPR004623">
    <property type="entry name" value="KdpA"/>
</dbReference>
<dbReference type="NCBIfam" id="TIGR00680">
    <property type="entry name" value="kdpA"/>
    <property type="match status" value="1"/>
</dbReference>
<dbReference type="PANTHER" id="PTHR30607">
    <property type="entry name" value="POTASSIUM-TRANSPORTING ATPASE A CHAIN"/>
    <property type="match status" value="1"/>
</dbReference>
<dbReference type="PANTHER" id="PTHR30607:SF2">
    <property type="entry name" value="POTASSIUM-TRANSPORTING ATPASE POTASSIUM-BINDING SUBUNIT"/>
    <property type="match status" value="1"/>
</dbReference>
<dbReference type="Pfam" id="PF03814">
    <property type="entry name" value="KdpA"/>
    <property type="match status" value="1"/>
</dbReference>
<dbReference type="PIRSF" id="PIRSF001294">
    <property type="entry name" value="K_ATPaseA"/>
    <property type="match status" value="1"/>
</dbReference>
<reference key="1">
    <citation type="journal article" date="2001" name="Lancet">
        <title>Whole genome sequencing of meticillin-resistant Staphylococcus aureus.</title>
        <authorList>
            <person name="Kuroda M."/>
            <person name="Ohta T."/>
            <person name="Uchiyama I."/>
            <person name="Baba T."/>
            <person name="Yuzawa H."/>
            <person name="Kobayashi I."/>
            <person name="Cui L."/>
            <person name="Oguchi A."/>
            <person name="Aoki K."/>
            <person name="Nagai Y."/>
            <person name="Lian J.-Q."/>
            <person name="Ito T."/>
            <person name="Kanamori M."/>
            <person name="Matsumaru H."/>
            <person name="Maruyama A."/>
            <person name="Murakami H."/>
            <person name="Hosoyama A."/>
            <person name="Mizutani-Ui Y."/>
            <person name="Takahashi N.K."/>
            <person name="Sawano T."/>
            <person name="Inoue R."/>
            <person name="Kaito C."/>
            <person name="Sekimizu K."/>
            <person name="Hirakawa H."/>
            <person name="Kuhara S."/>
            <person name="Goto S."/>
            <person name="Yabuzaki J."/>
            <person name="Kanehisa M."/>
            <person name="Yamashita A."/>
            <person name="Oshima K."/>
            <person name="Furuya K."/>
            <person name="Yoshino C."/>
            <person name="Shiba T."/>
            <person name="Hattori M."/>
            <person name="Ogasawara N."/>
            <person name="Hayashi H."/>
            <person name="Hiramatsu K."/>
        </authorList>
    </citation>
    <scope>NUCLEOTIDE SEQUENCE [LARGE SCALE GENOMIC DNA]</scope>
    <source>
        <strain>Mu50 / ATCC 700699</strain>
    </source>
</reference>
<comment type="function">
    <text evidence="1">Part of the high-affinity ATP-driven potassium transport (or Kdp) system, which catalyzes the hydrolysis of ATP coupled with the electrogenic transport of potassium into the cytoplasm. This subunit binds the extracellular potassium ions and delivers the ions to the membrane domain of KdpB through an intramembrane tunnel.</text>
</comment>
<comment type="subunit">
    <text evidence="1">The system is composed of three essential subunits: KdpA, KdpB and KdpC.</text>
</comment>
<comment type="subcellular location">
    <subcellularLocation>
        <location evidence="1">Cell membrane</location>
        <topology evidence="1">Multi-pass membrane protein</topology>
    </subcellularLocation>
</comment>
<comment type="similarity">
    <text evidence="1">Belongs to the KdpA family.</text>
</comment>
<accession>Q99SH9</accession>
<protein>
    <recommendedName>
        <fullName evidence="1">Potassium-transporting ATPase potassium-binding subunit 1</fullName>
    </recommendedName>
    <alternativeName>
        <fullName evidence="1">ATP phosphohydrolase [potassium-transporting] A chain 1</fullName>
    </alternativeName>
    <alternativeName>
        <fullName evidence="1">Potassium-binding and translocating subunit A 1</fullName>
    </alternativeName>
    <alternativeName>
        <fullName evidence="1">Potassium-translocating ATPase A chain 1</fullName>
    </alternativeName>
</protein>
<organism>
    <name type="scientific">Staphylococcus aureus (strain Mu50 / ATCC 700699)</name>
    <dbReference type="NCBI Taxonomy" id="158878"/>
    <lineage>
        <taxon>Bacteria</taxon>
        <taxon>Bacillati</taxon>
        <taxon>Bacillota</taxon>
        <taxon>Bacilli</taxon>
        <taxon>Bacillales</taxon>
        <taxon>Staphylococcaceae</taxon>
        <taxon>Staphylococcus</taxon>
    </lineage>
</organism>
<proteinExistence type="inferred from homology"/>
<name>KDPA1_STAAM</name>
<gene>
    <name evidence="1" type="primary">kdpA1</name>
    <name type="ordered locus">SAV2077</name>
</gene>
<evidence type="ECO:0000255" key="1">
    <source>
        <dbReference type="HAMAP-Rule" id="MF_00275"/>
    </source>
</evidence>
<keyword id="KW-1003">Cell membrane</keyword>
<keyword id="KW-0406">Ion transport</keyword>
<keyword id="KW-0472">Membrane</keyword>
<keyword id="KW-0630">Potassium</keyword>
<keyword id="KW-0633">Potassium transport</keyword>
<keyword id="KW-0812">Transmembrane</keyword>
<keyword id="KW-1133">Transmembrane helix</keyword>
<keyword id="KW-0813">Transport</keyword>